<gene>
    <name evidence="31" type="primary">EXOSC10</name>
    <name type="synonym">PMSCL</name>
    <name type="synonym">PMSCL2</name>
    <name evidence="29" type="synonym">RRP6</name>
</gene>
<accession>Q01780</accession>
<accession>B1AKQ0</accession>
<accession>B1AKQ1</accession>
<accession>Q15158</accession>
<dbReference type="EC" id="3.1.13.-" evidence="17"/>
<dbReference type="EMBL" id="X66113">
    <property type="protein sequence ID" value="CAA46904.1"/>
    <property type="molecule type" value="mRNA"/>
</dbReference>
<dbReference type="EMBL" id="L01457">
    <property type="protein sequence ID" value="AAB59352.1"/>
    <property type="molecule type" value="mRNA"/>
</dbReference>
<dbReference type="EMBL" id="AJ300188">
    <property type="protein sequence ID" value="CAC15569.1"/>
    <property type="molecule type" value="Genomic_DNA"/>
</dbReference>
<dbReference type="EMBL" id="AL109811">
    <property type="status" value="NOT_ANNOTATED_CDS"/>
    <property type="molecule type" value="Genomic_DNA"/>
</dbReference>
<dbReference type="EMBL" id="CH471130">
    <property type="protein sequence ID" value="EAW71679.1"/>
    <property type="molecule type" value="Genomic_DNA"/>
</dbReference>
<dbReference type="EMBL" id="BC039901">
    <property type="protein sequence ID" value="AAH39901.1"/>
    <property type="molecule type" value="mRNA"/>
</dbReference>
<dbReference type="EMBL" id="BC073788">
    <property type="protein sequence ID" value="AAH73788.1"/>
    <property type="molecule type" value="mRNA"/>
</dbReference>
<dbReference type="CCDS" id="CCDS126.1">
    <molecule id="Q01780-2"/>
</dbReference>
<dbReference type="CCDS" id="CCDS30584.1">
    <molecule id="Q01780-1"/>
</dbReference>
<dbReference type="PIR" id="A43920">
    <property type="entry name" value="A43920"/>
</dbReference>
<dbReference type="PIR" id="JH0796">
    <property type="entry name" value="JH0796"/>
</dbReference>
<dbReference type="RefSeq" id="NP_001001998.1">
    <molecule id="Q01780-1"/>
    <property type="nucleotide sequence ID" value="NM_001001998.3"/>
</dbReference>
<dbReference type="RefSeq" id="NP_002676.1">
    <molecule id="Q01780-2"/>
    <property type="nucleotide sequence ID" value="NM_002685.4"/>
</dbReference>
<dbReference type="PDB" id="2CPR">
    <property type="method" value="NMR"/>
    <property type="chains" value="A=483-593"/>
</dbReference>
<dbReference type="PDB" id="3SAF">
    <property type="method" value="X-ray"/>
    <property type="resolution" value="2.50 A"/>
    <property type="chains" value="A/B=180-606"/>
</dbReference>
<dbReference type="PDB" id="3SAG">
    <property type="method" value="X-ray"/>
    <property type="resolution" value="2.70 A"/>
    <property type="chains" value="A/B=180-606"/>
</dbReference>
<dbReference type="PDB" id="3SAH">
    <property type="method" value="X-ray"/>
    <property type="resolution" value="2.65 A"/>
    <property type="chains" value="A/B=180-606"/>
</dbReference>
<dbReference type="PDB" id="6D6Q">
    <property type="method" value="EM"/>
    <property type="resolution" value="3.45 A"/>
    <property type="chains" value="J=1-648, J=705-804"/>
</dbReference>
<dbReference type="PDB" id="6D6R">
    <property type="method" value="EM"/>
    <property type="resolution" value="3.45 A"/>
    <property type="chains" value="J=1-648, J=705-804"/>
</dbReference>
<dbReference type="PDB" id="7MQA">
    <property type="method" value="EM"/>
    <property type="resolution" value="2.70 A"/>
    <property type="chains" value="NV=1-885"/>
</dbReference>
<dbReference type="PDBsum" id="2CPR"/>
<dbReference type="PDBsum" id="3SAF"/>
<dbReference type="PDBsum" id="3SAG"/>
<dbReference type="PDBsum" id="3SAH"/>
<dbReference type="PDBsum" id="6D6Q"/>
<dbReference type="PDBsum" id="6D6R"/>
<dbReference type="PDBsum" id="7MQA"/>
<dbReference type="EMDB" id="EMD-0127"/>
<dbReference type="EMDB" id="EMD-14515"/>
<dbReference type="EMDB" id="EMD-23938"/>
<dbReference type="EMDB" id="EMD-7808"/>
<dbReference type="EMDB" id="EMD-7809"/>
<dbReference type="EMDB" id="EMD-7818"/>
<dbReference type="EMDB" id="EMD-7819"/>
<dbReference type="SMR" id="Q01780"/>
<dbReference type="BioGRID" id="111403">
    <property type="interactions" value="231"/>
</dbReference>
<dbReference type="ComplexPortal" id="CPX-476">
    <property type="entry name" value="Nuclear exosome complex, DIS3-EXOSC10 variant"/>
</dbReference>
<dbReference type="ComplexPortal" id="CPX-591">
    <property type="entry name" value="Nucleolar exosome complex, EXOSC10 variant"/>
</dbReference>
<dbReference type="ComplexPortal" id="CPX-600">
    <property type="entry name" value="Cytoplasmic exosome complex, DIS3L-EXOSC10 variant"/>
</dbReference>
<dbReference type="CORUM" id="Q01780"/>
<dbReference type="DIP" id="DIP-31249N"/>
<dbReference type="FunCoup" id="Q01780">
    <property type="interactions" value="3903"/>
</dbReference>
<dbReference type="IntAct" id="Q01780">
    <property type="interactions" value="121"/>
</dbReference>
<dbReference type="MINT" id="Q01780"/>
<dbReference type="STRING" id="9606.ENSP00000366135"/>
<dbReference type="GlyGen" id="Q01780">
    <property type="glycosylation" value="2 sites, 1 N-linked glycan (1 site), 1 O-linked glycan (1 site)"/>
</dbReference>
<dbReference type="iPTMnet" id="Q01780"/>
<dbReference type="MetOSite" id="Q01780"/>
<dbReference type="PhosphoSitePlus" id="Q01780"/>
<dbReference type="SwissPalm" id="Q01780"/>
<dbReference type="BioMuta" id="EXOSC10"/>
<dbReference type="DMDM" id="8928564"/>
<dbReference type="jPOST" id="Q01780"/>
<dbReference type="MassIVE" id="Q01780"/>
<dbReference type="PaxDb" id="9606-ENSP00000366135"/>
<dbReference type="PeptideAtlas" id="Q01780"/>
<dbReference type="ProteomicsDB" id="57986">
    <molecule id="Q01780-1"/>
</dbReference>
<dbReference type="ProteomicsDB" id="57987">
    <molecule id="Q01780-2"/>
</dbReference>
<dbReference type="Pumba" id="Q01780"/>
<dbReference type="Antibodypedia" id="13683">
    <property type="antibodies" value="193 antibodies from 30 providers"/>
</dbReference>
<dbReference type="DNASU" id="5394"/>
<dbReference type="Ensembl" id="ENST00000304457.11">
    <molecule id="Q01780-2"/>
    <property type="protein sequence ID" value="ENSP00000307307.7"/>
    <property type="gene ID" value="ENSG00000171824.14"/>
</dbReference>
<dbReference type="Ensembl" id="ENST00000376936.9">
    <molecule id="Q01780-1"/>
    <property type="protein sequence ID" value="ENSP00000366135.4"/>
    <property type="gene ID" value="ENSG00000171824.14"/>
</dbReference>
<dbReference type="GeneID" id="5394"/>
<dbReference type="KEGG" id="hsa:5394"/>
<dbReference type="MANE-Select" id="ENST00000376936.9">
    <property type="protein sequence ID" value="ENSP00000366135.4"/>
    <property type="RefSeq nucleotide sequence ID" value="NM_001001998.3"/>
    <property type="RefSeq protein sequence ID" value="NP_001001998.1"/>
</dbReference>
<dbReference type="UCSC" id="uc001asa.4">
    <molecule id="Q01780-1"/>
    <property type="organism name" value="human"/>
</dbReference>
<dbReference type="AGR" id="HGNC:9138"/>
<dbReference type="CTD" id="5394"/>
<dbReference type="DisGeNET" id="5394"/>
<dbReference type="GeneCards" id="EXOSC10"/>
<dbReference type="HGNC" id="HGNC:9138">
    <property type="gene designation" value="EXOSC10"/>
</dbReference>
<dbReference type="HPA" id="ENSG00000171824">
    <property type="expression patterns" value="Low tissue specificity"/>
</dbReference>
<dbReference type="MIM" id="605960">
    <property type="type" value="gene"/>
</dbReference>
<dbReference type="neXtProt" id="NX_Q01780"/>
<dbReference type="OpenTargets" id="ENSG00000171824"/>
<dbReference type="PharmGKB" id="PA33464"/>
<dbReference type="VEuPathDB" id="HostDB:ENSG00000171824"/>
<dbReference type="eggNOG" id="KOG2206">
    <property type="taxonomic scope" value="Eukaryota"/>
</dbReference>
<dbReference type="GeneTree" id="ENSGT00390000015408"/>
<dbReference type="HOGENOM" id="CLU_010129_1_1_1"/>
<dbReference type="InParanoid" id="Q01780"/>
<dbReference type="OMA" id="NIMRPQM"/>
<dbReference type="OrthoDB" id="2250022at2759"/>
<dbReference type="PAN-GO" id="Q01780">
    <property type="GO annotations" value="13 GO annotations based on evolutionary models"/>
</dbReference>
<dbReference type="PhylomeDB" id="Q01780"/>
<dbReference type="TreeFam" id="TF105991"/>
<dbReference type="PathwayCommons" id="Q01780"/>
<dbReference type="Reactome" id="R-HSA-6791226">
    <property type="pathway name" value="Major pathway of rRNA processing in the nucleolus and cytosol"/>
</dbReference>
<dbReference type="SignaLink" id="Q01780"/>
<dbReference type="SIGNOR" id="Q01780"/>
<dbReference type="BioGRID-ORCS" id="5394">
    <property type="hits" value="505 hits in 1167 CRISPR screens"/>
</dbReference>
<dbReference type="CD-CODE" id="91857CE7">
    <property type="entry name" value="Nucleolus"/>
</dbReference>
<dbReference type="ChiTaRS" id="EXOSC10">
    <property type="organism name" value="human"/>
</dbReference>
<dbReference type="EvolutionaryTrace" id="Q01780"/>
<dbReference type="GeneWiki" id="Exosome_component_10"/>
<dbReference type="GenomeRNAi" id="5394"/>
<dbReference type="Pharos" id="Q01780">
    <property type="development level" value="Tbio"/>
</dbReference>
<dbReference type="PRO" id="PR:Q01780"/>
<dbReference type="Proteomes" id="UP000005640">
    <property type="component" value="Chromosome 1"/>
</dbReference>
<dbReference type="RNAct" id="Q01780">
    <property type="molecule type" value="protein"/>
</dbReference>
<dbReference type="Bgee" id="ENSG00000171824">
    <property type="expression patterns" value="Expressed in cerebellar hemisphere and 203 other cell types or tissues"/>
</dbReference>
<dbReference type="ExpressionAtlas" id="Q01780">
    <property type="expression patterns" value="baseline and differential"/>
</dbReference>
<dbReference type="GO" id="GO:0005737">
    <property type="term" value="C:cytoplasm"/>
    <property type="evidence" value="ECO:0000314"/>
    <property type="project" value="UniProtKB"/>
</dbReference>
<dbReference type="GO" id="GO:0000177">
    <property type="term" value="C:cytoplasmic exosome (RNase complex)"/>
    <property type="evidence" value="ECO:0000303"/>
    <property type="project" value="ComplexPortal"/>
</dbReference>
<dbReference type="GO" id="GO:0005829">
    <property type="term" value="C:cytosol"/>
    <property type="evidence" value="ECO:0000314"/>
    <property type="project" value="HPA"/>
</dbReference>
<dbReference type="GO" id="GO:0000791">
    <property type="term" value="C:euchromatin"/>
    <property type="evidence" value="ECO:0000315"/>
    <property type="project" value="UniProtKB"/>
</dbReference>
<dbReference type="GO" id="GO:0000178">
    <property type="term" value="C:exosome (RNase complex)"/>
    <property type="evidence" value="ECO:0000314"/>
    <property type="project" value="UniProtKB"/>
</dbReference>
<dbReference type="GO" id="GO:0016020">
    <property type="term" value="C:membrane"/>
    <property type="evidence" value="ECO:0007005"/>
    <property type="project" value="UniProtKB"/>
</dbReference>
<dbReference type="GO" id="GO:0000176">
    <property type="term" value="C:nuclear exosome (RNase complex)"/>
    <property type="evidence" value="ECO:0000314"/>
    <property type="project" value="UniProtKB"/>
</dbReference>
<dbReference type="GO" id="GO:0101019">
    <property type="term" value="C:nucleolar exosome (RNase complex)"/>
    <property type="evidence" value="ECO:0000303"/>
    <property type="project" value="ComplexPortal"/>
</dbReference>
<dbReference type="GO" id="GO:0005730">
    <property type="term" value="C:nucleolus"/>
    <property type="evidence" value="ECO:0000314"/>
    <property type="project" value="HPA"/>
</dbReference>
<dbReference type="GO" id="GO:0005654">
    <property type="term" value="C:nucleoplasm"/>
    <property type="evidence" value="ECO:0000314"/>
    <property type="project" value="HPA"/>
</dbReference>
<dbReference type="GO" id="GO:0005634">
    <property type="term" value="C:nucleus"/>
    <property type="evidence" value="ECO:0000314"/>
    <property type="project" value="UniProtKB"/>
</dbReference>
<dbReference type="GO" id="GO:0032040">
    <property type="term" value="C:small-subunit processome"/>
    <property type="evidence" value="ECO:0000314"/>
    <property type="project" value="UniProtKB"/>
</dbReference>
<dbReference type="GO" id="GO:0000175">
    <property type="term" value="F:3'-5'-RNA exonuclease activity"/>
    <property type="evidence" value="ECO:0000315"/>
    <property type="project" value="BHF-UCL"/>
</dbReference>
<dbReference type="GO" id="GO:0046872">
    <property type="term" value="F:metal ion binding"/>
    <property type="evidence" value="ECO:0007669"/>
    <property type="project" value="UniProtKB-KW"/>
</dbReference>
<dbReference type="GO" id="GO:0000166">
    <property type="term" value="F:nucleotide binding"/>
    <property type="evidence" value="ECO:0007669"/>
    <property type="project" value="InterPro"/>
</dbReference>
<dbReference type="GO" id="GO:0003723">
    <property type="term" value="F:RNA binding"/>
    <property type="evidence" value="ECO:0007005"/>
    <property type="project" value="UniProtKB"/>
</dbReference>
<dbReference type="GO" id="GO:0004532">
    <property type="term" value="F:RNA exonuclease activity"/>
    <property type="evidence" value="ECO:0000314"/>
    <property type="project" value="UniProtKB"/>
</dbReference>
<dbReference type="GO" id="GO:0003727">
    <property type="term" value="F:single-stranded RNA binding"/>
    <property type="evidence" value="ECO:0000318"/>
    <property type="project" value="GO_Central"/>
</dbReference>
<dbReference type="GO" id="GO:0070034">
    <property type="term" value="F:telomerase RNA binding"/>
    <property type="evidence" value="ECO:0000353"/>
    <property type="project" value="BHF-UCL"/>
</dbReference>
<dbReference type="GO" id="GO:0071034">
    <property type="term" value="P:CUT catabolic process"/>
    <property type="evidence" value="ECO:0000315"/>
    <property type="project" value="UniProtKB"/>
</dbReference>
<dbReference type="GO" id="GO:0006281">
    <property type="term" value="P:DNA repair"/>
    <property type="evidence" value="ECO:0007669"/>
    <property type="project" value="UniProtKB-KW"/>
</dbReference>
<dbReference type="GO" id="GO:0000467">
    <property type="term" value="P:exonucleolytic trimming to generate mature 3'-end of 5.8S rRNA from tricistronic rRNA transcript (SSU-rRNA, 5.8S rRNA, LSU-rRNA)"/>
    <property type="evidence" value="ECO:0000318"/>
    <property type="project" value="GO_Central"/>
</dbReference>
<dbReference type="GO" id="GO:0071044">
    <property type="term" value="P:histone mRNA catabolic process"/>
    <property type="evidence" value="ECO:0000315"/>
    <property type="project" value="UniProtKB"/>
</dbReference>
<dbReference type="GO" id="GO:0000460">
    <property type="term" value="P:maturation of 5.8S rRNA"/>
    <property type="evidence" value="ECO:0000315"/>
    <property type="project" value="UniProtKB"/>
</dbReference>
<dbReference type="GO" id="GO:0032211">
    <property type="term" value="P:negative regulation of telomere maintenance via telomerase"/>
    <property type="evidence" value="ECO:0000315"/>
    <property type="project" value="BHF-UCL"/>
</dbReference>
<dbReference type="GO" id="GO:0071028">
    <property type="term" value="P:nuclear mRNA surveillance"/>
    <property type="evidence" value="ECO:0000315"/>
    <property type="project" value="UniProtKB"/>
</dbReference>
<dbReference type="GO" id="GO:0071040">
    <property type="term" value="P:nuclear polyadenylation-dependent antisense transcript catabolic process"/>
    <property type="evidence" value="ECO:0000318"/>
    <property type="project" value="GO_Central"/>
</dbReference>
<dbReference type="GO" id="GO:0071039">
    <property type="term" value="P:nuclear polyadenylation-dependent CUT catabolic process"/>
    <property type="evidence" value="ECO:0000318"/>
    <property type="project" value="GO_Central"/>
</dbReference>
<dbReference type="GO" id="GO:0071035">
    <property type="term" value="P:nuclear polyadenylation-dependent rRNA catabolic process"/>
    <property type="evidence" value="ECO:0000315"/>
    <property type="project" value="UniProtKB"/>
</dbReference>
<dbReference type="GO" id="GO:0071036">
    <property type="term" value="P:nuclear polyadenylation-dependent snoRNA catabolic process"/>
    <property type="evidence" value="ECO:0000318"/>
    <property type="project" value="GO_Central"/>
</dbReference>
<dbReference type="GO" id="GO:0071037">
    <property type="term" value="P:nuclear polyadenylation-dependent snRNA catabolic process"/>
    <property type="evidence" value="ECO:0000318"/>
    <property type="project" value="GO_Central"/>
</dbReference>
<dbReference type="GO" id="GO:0000956">
    <property type="term" value="P:nuclear-transcribed mRNA catabolic process"/>
    <property type="evidence" value="ECO:0000315"/>
    <property type="project" value="UniProtKB"/>
</dbReference>
<dbReference type="GO" id="GO:0000184">
    <property type="term" value="P:nuclear-transcribed mRNA catabolic process, nonsense-mediated decay"/>
    <property type="evidence" value="ECO:0007669"/>
    <property type="project" value="UniProtKB-KW"/>
</dbReference>
<dbReference type="GO" id="GO:0071051">
    <property type="term" value="P:poly(A)-dependent snoRNA 3'-end processing"/>
    <property type="evidence" value="ECO:0000318"/>
    <property type="project" value="GO_Central"/>
</dbReference>
<dbReference type="GO" id="GO:1905746">
    <property type="term" value="P:positive regulation of mRNA cis splicing, via spliceosome"/>
    <property type="evidence" value="ECO:0007669"/>
    <property type="project" value="Ensembl"/>
</dbReference>
<dbReference type="GO" id="GO:1904872">
    <property type="term" value="P:regulation of telomerase RNA localization to Cajal body"/>
    <property type="evidence" value="ECO:0000315"/>
    <property type="project" value="BHF-UCL"/>
</dbReference>
<dbReference type="GO" id="GO:0042274">
    <property type="term" value="P:ribosomal small subunit biogenesis"/>
    <property type="evidence" value="ECO:0000314"/>
    <property type="project" value="UniProtKB"/>
</dbReference>
<dbReference type="GO" id="GO:0006401">
    <property type="term" value="P:RNA catabolic process"/>
    <property type="evidence" value="ECO:0000314"/>
    <property type="project" value="ComplexPortal"/>
</dbReference>
<dbReference type="GO" id="GO:0006396">
    <property type="term" value="P:RNA processing"/>
    <property type="evidence" value="ECO:0000314"/>
    <property type="project" value="ComplexPortal"/>
</dbReference>
<dbReference type="GO" id="GO:0006364">
    <property type="term" value="P:rRNA processing"/>
    <property type="evidence" value="ECO:0000304"/>
    <property type="project" value="Reactome"/>
</dbReference>
<dbReference type="GO" id="GO:0071038">
    <property type="term" value="P:TRAMP-dependent tRNA surveillance pathway"/>
    <property type="evidence" value="ECO:0000318"/>
    <property type="project" value="GO_Central"/>
</dbReference>
<dbReference type="CDD" id="cd06147">
    <property type="entry name" value="Rrp6p_like_exo"/>
    <property type="match status" value="1"/>
</dbReference>
<dbReference type="FunFam" id="3.30.420.10:FF:000022">
    <property type="entry name" value="Exosome component 10"/>
    <property type="match status" value="1"/>
</dbReference>
<dbReference type="FunFam" id="1.10.150.80:FF:000001">
    <property type="entry name" value="Putative exosome component 10"/>
    <property type="match status" value="1"/>
</dbReference>
<dbReference type="Gene3D" id="1.10.150.80">
    <property type="entry name" value="HRDC domain"/>
    <property type="match status" value="1"/>
</dbReference>
<dbReference type="Gene3D" id="3.30.420.10">
    <property type="entry name" value="Ribonuclease H-like superfamily/Ribonuclease H"/>
    <property type="match status" value="1"/>
</dbReference>
<dbReference type="InterPro" id="IPR002562">
    <property type="entry name" value="3'-5'_exonuclease_dom"/>
</dbReference>
<dbReference type="InterPro" id="IPR012588">
    <property type="entry name" value="Exosome-assoc_fac_Rrp6_N"/>
</dbReference>
<dbReference type="InterPro" id="IPR010997">
    <property type="entry name" value="HRDC-like_sf"/>
</dbReference>
<dbReference type="InterPro" id="IPR002121">
    <property type="entry name" value="HRDC_dom"/>
</dbReference>
<dbReference type="InterPro" id="IPR044876">
    <property type="entry name" value="HRDC_dom_sf"/>
</dbReference>
<dbReference type="InterPro" id="IPR012337">
    <property type="entry name" value="RNaseH-like_sf"/>
</dbReference>
<dbReference type="InterPro" id="IPR036397">
    <property type="entry name" value="RNaseH_sf"/>
</dbReference>
<dbReference type="InterPro" id="IPR045092">
    <property type="entry name" value="Rrp6-like"/>
</dbReference>
<dbReference type="InterPro" id="IPR049559">
    <property type="entry name" value="Rrp6p-like_exo"/>
</dbReference>
<dbReference type="PANTHER" id="PTHR12124:SF47">
    <property type="entry name" value="EXOSOME COMPONENT 10"/>
    <property type="match status" value="1"/>
</dbReference>
<dbReference type="PANTHER" id="PTHR12124">
    <property type="entry name" value="POLYMYOSITIS/SCLERODERMA AUTOANTIGEN-RELATED"/>
    <property type="match status" value="1"/>
</dbReference>
<dbReference type="Pfam" id="PF01612">
    <property type="entry name" value="DNA_pol_A_exo1"/>
    <property type="match status" value="1"/>
</dbReference>
<dbReference type="Pfam" id="PF00570">
    <property type="entry name" value="HRDC"/>
    <property type="match status" value="1"/>
</dbReference>
<dbReference type="Pfam" id="PF08066">
    <property type="entry name" value="PMC2NT"/>
    <property type="match status" value="1"/>
</dbReference>
<dbReference type="SMART" id="SM00474">
    <property type="entry name" value="35EXOc"/>
    <property type="match status" value="1"/>
</dbReference>
<dbReference type="SMART" id="SM00341">
    <property type="entry name" value="HRDC"/>
    <property type="match status" value="1"/>
</dbReference>
<dbReference type="SUPFAM" id="SSF47819">
    <property type="entry name" value="HRDC-like"/>
    <property type="match status" value="1"/>
</dbReference>
<dbReference type="SUPFAM" id="SSF53098">
    <property type="entry name" value="Ribonuclease H-like"/>
    <property type="match status" value="1"/>
</dbReference>
<dbReference type="PROSITE" id="PS50967">
    <property type="entry name" value="HRDC"/>
    <property type="match status" value="1"/>
</dbReference>
<feature type="chain" id="PRO_0000087133" description="Exosome complex component 10">
    <location>
        <begin position="1"/>
        <end position="885"/>
    </location>
</feature>
<feature type="domain" description="3'-5' exonuclease" evidence="2">
    <location>
        <begin position="289"/>
        <end position="455"/>
    </location>
</feature>
<feature type="domain" description="HRDC" evidence="3">
    <location>
        <begin position="503"/>
        <end position="583"/>
    </location>
</feature>
<feature type="region of interest" description="Disordered" evidence="4">
    <location>
        <begin position="776"/>
        <end position="885"/>
    </location>
</feature>
<feature type="compositionally biased region" description="Basic and acidic residues" evidence="4">
    <location>
        <begin position="776"/>
        <end position="794"/>
    </location>
</feature>
<feature type="compositionally biased region" description="Basic and acidic residues" evidence="4">
    <location>
        <begin position="804"/>
        <end position="816"/>
    </location>
</feature>
<feature type="compositionally biased region" description="Polar residues" evidence="4">
    <location>
        <begin position="831"/>
        <end position="848"/>
    </location>
</feature>
<feature type="compositionally biased region" description="Polar residues" evidence="4">
    <location>
        <begin position="861"/>
        <end position="871"/>
    </location>
</feature>
<feature type="binding site" evidence="17 32 33 34">
    <location>
        <position position="313"/>
    </location>
    <ligand>
        <name>Mg(2+)</name>
        <dbReference type="ChEBI" id="CHEBI:18420"/>
        <label>1</label>
    </ligand>
</feature>
<feature type="binding site" evidence="17 34">
    <location>
        <position position="313"/>
    </location>
    <ligand>
        <name>Mg(2+)</name>
        <dbReference type="ChEBI" id="CHEBI:18420"/>
        <label>2</label>
    </ligand>
</feature>
<feature type="binding site" evidence="17 34">
    <location>
        <position position="315"/>
    </location>
    <ligand>
        <name>Mg(2+)</name>
        <dbReference type="ChEBI" id="CHEBI:18420"/>
        <label>2</label>
    </ligand>
</feature>
<feature type="binding site" evidence="17 32 33 34">
    <location>
        <position position="371"/>
    </location>
    <ligand>
        <name>Mg(2+)</name>
        <dbReference type="ChEBI" id="CHEBI:18420"/>
        <label>1</label>
    </ligand>
</feature>
<feature type="binding site" evidence="17 34">
    <location>
        <position position="440"/>
    </location>
    <ligand>
        <name>Mg(2+)</name>
        <dbReference type="ChEBI" id="CHEBI:18420"/>
        <label>2</label>
    </ligand>
</feature>
<feature type="site" description="Not ubiquitinated" evidence="27">
    <location>
        <position position="583"/>
    </location>
</feature>
<feature type="modified residue" description="Phosphoserine" evidence="38">
    <location>
        <position position="821"/>
    </location>
</feature>
<feature type="cross-link" description="Glycyl lysine isopeptide (Lys-Gly) (interchain with G-Cter in SUMO2)" evidence="42">
    <location>
        <position position="19"/>
    </location>
</feature>
<feature type="cross-link" description="Glycyl lysine isopeptide (Lys-Gly) (interchain with G-Cter in SUMO1); alternate" evidence="27 39">
    <location>
        <position position="583"/>
    </location>
</feature>
<feature type="cross-link" description="Glycyl lysine isopeptide (Lys-Gly) (interchain with G-Cter in SUMO2); alternate" evidence="27 40 42">
    <location>
        <position position="583"/>
    </location>
</feature>
<feature type="cross-link" description="Glycyl lysine isopeptide (Lys-Gly) (interchain with G-Cter in SUMO2)" evidence="42">
    <location>
        <position position="710"/>
    </location>
</feature>
<feature type="cross-link" description="Glycyl lysine isopeptide (Lys-Gly) (interchain with G-Cter in SUMO2)" evidence="41 42">
    <location>
        <position position="826"/>
    </location>
</feature>
<feature type="cross-link" description="Glycyl lysine isopeptide (Lys-Gly) (interchain with G-Cter in SUMO2)" evidence="42">
    <location>
        <position position="833"/>
    </location>
</feature>
<feature type="cross-link" description="Glycyl lysine isopeptide (Lys-Gly) (interchain with G-Cter in SUMO2)" evidence="42">
    <location>
        <position position="859"/>
    </location>
</feature>
<feature type="cross-link" description="Glycyl lysine isopeptide (Lys-Gly) (interchain with G-Cter in SUMO2)" evidence="42">
    <location>
        <position position="873"/>
    </location>
</feature>
<feature type="splice variant" id="VSP_004362" description="In isoform 2." evidence="28">
    <location>
        <begin position="695"/>
        <end position="719"/>
    </location>
</feature>
<feature type="mutagenesis site" description="No effect on sumoylation by USP36." evidence="27">
    <original>K</original>
    <variation>R</variation>
    <location>
        <position position="19"/>
    </location>
</feature>
<feature type="mutagenesis site" description="No effect on sumoylation by USP36. Reduces sumoylation levels and increases steady-state expression; when associated with R-201 and R-583." evidence="20 27">
    <original>K</original>
    <variation>R</variation>
    <location>
        <position position="168"/>
    </location>
</feature>
<feature type="mutagenesis site" description="Reduces sumoylation levels and increases steady-state expression; when associated with R-168 and R-583." evidence="20">
    <original>K</original>
    <variation>R</variation>
    <location>
        <position position="201"/>
    </location>
</feature>
<feature type="mutagenesis site" description="Abolishes exoribonuclease activity." evidence="17">
    <original>D</original>
    <variation>N</variation>
    <location>
        <position position="313"/>
    </location>
</feature>
<feature type="mutagenesis site" description="Abolishes exoribonuclease activity." evidence="17">
    <original>E</original>
    <variation>Q</variation>
    <location>
        <position position="315"/>
    </location>
</feature>
<feature type="mutagenesis site" description="Slightly reduces exoribonuclease activity." evidence="17">
    <original>H</original>
    <variation>A</variation>
    <location>
        <position position="316"/>
    </location>
</feature>
<feature type="mutagenesis site" description="Abolishes exoribonuclease activity." evidence="17">
    <original>D</original>
    <variation>N</variation>
    <location>
        <position position="371"/>
    </location>
</feature>
<feature type="mutagenesis site" description="Increases exoribonuclease activity." evidence="17">
    <original>D</original>
    <variation>A</variation>
    <location>
        <position position="404"/>
    </location>
</feature>
<feature type="mutagenesis site" description="Significantly reduces exoribonuclease activity." evidence="17">
    <original>Y</original>
    <variation>A</variation>
    <location>
        <position position="436"/>
    </location>
</feature>
<feature type="mutagenesis site" description="Reduces sumoylation by USP36. Significantly attenuates binding to pre-rRNA across the 5.8S-ITS2 and 18S-ITS1 junctions. Reduces sumoylation levels and increases steady-state expression; when associated with R-168 and R-201." evidence="20 27">
    <original>K</original>
    <variation>R</variation>
    <location>
        <position position="583"/>
    </location>
</feature>
<feature type="mutagenesis site" description="No effect on sumoylation by USP36." evidence="27">
    <original>K</original>
    <variation>R</variation>
    <location>
        <position position="710"/>
    </location>
</feature>
<feature type="mutagenesis site" description="No effect on sumoylation by USP36." evidence="27">
    <original>K</original>
    <variation>R</variation>
    <location>
        <position position="826"/>
    </location>
</feature>
<feature type="mutagenesis site" description="No effect on sumoylation by USP36." evidence="27">
    <original>K</original>
    <variation>R</variation>
    <location>
        <position position="833"/>
    </location>
</feature>
<feature type="mutagenesis site" description="No effect on sumoylation by USP36." evidence="27">
    <original>K</original>
    <variation>R</variation>
    <location>
        <position position="859"/>
    </location>
</feature>
<feature type="mutagenesis site" description="No effect on sumoylation by USP36." evidence="27">
    <original>K</original>
    <variation>R</variation>
    <location>
        <position position="873"/>
    </location>
</feature>
<feature type="helix" evidence="44">
    <location>
        <begin position="183"/>
        <end position="186"/>
    </location>
</feature>
<feature type="strand" evidence="44">
    <location>
        <begin position="194"/>
        <end position="196"/>
    </location>
</feature>
<feature type="helix" evidence="44">
    <location>
        <begin position="214"/>
        <end position="216"/>
    </location>
</feature>
<feature type="helix" evidence="44">
    <location>
        <begin position="218"/>
        <end position="220"/>
    </location>
</feature>
<feature type="strand" evidence="44">
    <location>
        <begin position="253"/>
        <end position="255"/>
    </location>
</feature>
<feature type="helix" evidence="44">
    <location>
        <begin position="259"/>
        <end position="263"/>
    </location>
</feature>
<feature type="helix" evidence="44">
    <location>
        <begin position="269"/>
        <end position="272"/>
    </location>
</feature>
<feature type="helix" evidence="44">
    <location>
        <begin position="283"/>
        <end position="285"/>
    </location>
</feature>
<feature type="strand" evidence="44">
    <location>
        <begin position="288"/>
        <end position="291"/>
    </location>
</feature>
<feature type="helix" evidence="44">
    <location>
        <begin position="294"/>
        <end position="304"/>
    </location>
</feature>
<feature type="strand" evidence="44">
    <location>
        <begin position="308"/>
        <end position="317"/>
    </location>
</feature>
<feature type="strand" evidence="44">
    <location>
        <begin position="325"/>
        <end position="332"/>
    </location>
</feature>
<feature type="strand" evidence="44">
    <location>
        <begin position="337"/>
        <end position="341"/>
    </location>
</feature>
<feature type="turn" evidence="44">
    <location>
        <begin position="342"/>
        <end position="345"/>
    </location>
</feature>
<feature type="helix" evidence="44">
    <location>
        <begin position="346"/>
        <end position="352"/>
    </location>
</feature>
<feature type="helix" evidence="44">
    <location>
        <begin position="353"/>
        <end position="356"/>
    </location>
</feature>
<feature type="strand" evidence="44">
    <location>
        <begin position="361"/>
        <end position="367"/>
    </location>
</feature>
<feature type="helix" evidence="44">
    <location>
        <begin position="369"/>
        <end position="379"/>
    </location>
</feature>
<feature type="strand" evidence="44">
    <location>
        <begin position="384"/>
        <end position="388"/>
    </location>
</feature>
<feature type="helix" evidence="44">
    <location>
        <begin position="389"/>
        <end position="395"/>
    </location>
</feature>
<feature type="helix" evidence="44">
    <location>
        <begin position="403"/>
        <end position="411"/>
    </location>
</feature>
<feature type="turn" evidence="44">
    <location>
        <begin position="418"/>
        <end position="421"/>
    </location>
</feature>
<feature type="helix" evidence="44">
    <location>
        <begin position="431"/>
        <end position="442"/>
    </location>
</feature>
<feature type="helix" evidence="44">
    <location>
        <begin position="444"/>
        <end position="458"/>
    </location>
</feature>
<feature type="strand" evidence="45">
    <location>
        <begin position="461"/>
        <end position="463"/>
    </location>
</feature>
<feature type="helix" evidence="44">
    <location>
        <begin position="464"/>
        <end position="476"/>
    </location>
</feature>
<feature type="helix" evidence="44">
    <location>
        <begin position="490"/>
        <end position="492"/>
    </location>
</feature>
<feature type="helix" evidence="44">
    <location>
        <begin position="493"/>
        <end position="496"/>
    </location>
</feature>
<feature type="strand" evidence="43">
    <location>
        <begin position="497"/>
        <end position="500"/>
    </location>
</feature>
<feature type="helix" evidence="44">
    <location>
        <begin position="504"/>
        <end position="524"/>
    </location>
</feature>
<feature type="helix" evidence="44">
    <location>
        <begin position="528"/>
        <end position="531"/>
    </location>
</feature>
<feature type="helix" evidence="44">
    <location>
        <begin position="534"/>
        <end position="543"/>
    </location>
</feature>
<feature type="helix" evidence="44">
    <location>
        <begin position="548"/>
        <end position="552"/>
    </location>
</feature>
<feature type="strand" evidence="45">
    <location>
        <begin position="555"/>
        <end position="557"/>
    </location>
</feature>
<feature type="helix" evidence="44">
    <location>
        <begin position="560"/>
        <end position="564"/>
    </location>
</feature>
<feature type="helix" evidence="44">
    <location>
        <begin position="566"/>
        <end position="577"/>
    </location>
</feature>
<feature type="helix" evidence="44">
    <location>
        <begin position="583"/>
        <end position="586"/>
    </location>
</feature>
<feature type="strand" evidence="46">
    <location>
        <begin position="636"/>
        <end position="638"/>
    </location>
</feature>
<sequence length="885" mass="100831">MAPPSTREPRVLSATSATKSDGEMVLPGFPDADSFVKFALGSVVAVTKASGGLPQFGDEYDFYRSFPGFQAFCETQGDRLLQCMSRVMQYHGCRSNIKDRSKVTELEDKFDLLVDANDVILERVGILLDEASGVNKNQQPVLPAGLQVPKTVVSSWNRKAAEYGKKAKSETFRLLHAKNIIRPQLKFREKIDNSNTPFLPKIFIKPNAQKPLPQALSKERRERPQDRPEDLDVPPALADFIHQQRTQQVEQDMFAHPYQYELNHFTPADAVLQKPQPQLYRPIEETPCHFISSLDELVELNEKLLNCQEFAVDLEHHSYRSFLGLTCLMQISTRTEDFIIDTLELRSDMYILNESLTDPAIVKVFHGADSDIEWLQKDFGLYVVNMFDTHQAARLLNLGRHSLDHLLKLYCNVDSNKQYQLADWRIRPLPEEMLSYARDDTHYLLYIYDKMRLEMWERGNGQPVQLQVVWQRSRDICLKKFIKPIFTDESYLELYRKQKKHLNTQQLTAFQLLFAWRDKTARREDESYGYVLPNHMMLKIAEELPKEPQGIIACCNPVPPLVRQQINEMHLLIQQAREMPLLKSEVAAGVKKSGPLPSAERLENVLFGPHDCSHAPPDGYPIIPTSGSVPVQKQASLFPDEKEDNLLGTTCLIATAVITLFNEPSAEDSKKGPLTVAQKKAQNIMESFENPFRMFLPSLGHRAPVSQAAKFDPSTKIYEISNRWKLAQVQVQKDSKEAVKKKAAEQTAAREQAKEACKAAAEQAISVRQQVVLENAAKKRERATSDPRTTEQKQEKKRLKISKKPKDPEPPEKEFTPYDYSQSDFKAFAGNSKSKVSSQFDPNKQTPSGKKCIAAKKIKQSVGNKSMSFPTGKSDRGFRYNWPQR</sequence>
<comment type="function">
    <text evidence="1 5 7 9 10 11 12 13 16 18 20 24 25 26 27">Catalytic component of the RNA exosome complex which has 3'-&gt;5' exoribonuclease activity and participates in a multitude of cellular RNA processing and degradation events. In the nucleus, the RNA exosome complex is involved in proper maturation of stable RNA species such as rRNA, snRNA and snoRNA, in the elimination of RNA processing by-products and non-coding 'pervasive' transcripts, such as antisense RNA species and promoter-upstream transcripts (PROMPTs), and of mRNAs with processing defects, thereby limiting or excluding their export to the cytoplasm. Part of the small subunit (SSU) processome, first precursor of the small eukaryotic ribosomal subunit. During the assembly of the SSU processome in the nucleolus, many ribosome biogenesis factors, an RNA chaperone and ribosomal proteins associate with the nascent pre-rRNA and work in concert to generate RNA folding, modifications, rearrangements and cleavage as well as targeted degradation of pre-ribosomal RNA by the RNA exosome (PubMed:34516797). The RNA exosome may be involved in Ig class switch recombination (CSR) and/or Ig variable region somatic hypermutation (SHM) by targeting AICDA deamination activity to transcribed dsDNA substrates. In the cytoplasm, the RNA exosome complex is involved in general mRNA turnover and specifically degrades inherently unstable mRNAs containing AU-rich elements (AREs) within their 3' untranslated regions, and in RNA surveillance pathways, preventing translation of aberrant mRNAs. It seems to be involved in degradation of histone mRNA. EXOSC10 is required for nucleolar localization of C1D and probably mediates the association of MTREX, C1D and MPHOSPH6 with the RNA exosome involved in the maturation of 5.8S rRNA. Plays a role in the recruitment of replication protein A complex (RPA) and RAD51 to DNA double-strand breaks caused by irradiation, contributing to DNA repair by homologous recombination (PubMed:25632158, PubMed:31086179). Regulates levels of damage-induced RNAs in order to prevent DNA-RNA hybrid formation at DNA double-strand breaks and limit DNA end resection after damage (PubMed:31086179). Plays a role in oocyte development, maturation and survival (By similarity). Required for normal testis development and mitotic division of spermatogonia (By similarity). Plays a role in proper embryo development (By similarity). Required for global protein translation (PubMed:26857222, PubMed:36912080). Required for cell proliferation (PubMed:36912080). Regulates metabolism of C9orf72-derived repeat RNA that can be translated into toxic dipeptide repeat proteins (PubMed:32830871).</text>
</comment>
<comment type="cofactor">
    <cofactor evidence="17">
        <name>Mg(2+)</name>
        <dbReference type="ChEBI" id="CHEBI:18420"/>
    </cofactor>
</comment>
<comment type="activity regulation">
    <text evidence="25">Arginine-rich dipeptide repeat proteins expressed from C9orf72-derived repeat RNA interact with EXOSC10 and inhibit its ability to promote degradation of this RNA.</text>
</comment>
<comment type="subunit">
    <text evidence="6 8 9 15 19 21 22 23 26 27">Component of the RNA exosome complex (PubMed:20531389, PubMed:26166824, PubMed:29906447). The catalytically inactive RNA exosome core complex (Exo-9) associates with the catalytic subunit EXOSC10/RRP6 (via its N-terminus) (PubMed:20531389, PubMed:29906447, PubMed:30047866). Exo-9 may associate with DIS3 to form the nucleolar exosome complex, or DIS3L to form the cytoplasmic exosome complex (PubMed:20531389, PubMed:29906447). The RNA exosome complex interacts with cofactors C1D/RRP47, MPHOSPH6/MPP6 and MTREX/MTR4 (PubMed:17412707, PubMed:26166824, PubMed:30047866). Interacts with MTREX; the interaction with MTREX mediates the association of MTREX with nuclear RNA exosomes (PubMed:26166824). Part of the small subunit (SSU) processome, composed of more than 70 proteins and the RNA chaperone small nucleolar RNA (snoRNA) U3 (PubMed:34516797). Interacts with ALYREF/THOC4 (PubMed:17234882). Interacts with DHX36; this interaction occurs in a RNase-insensitive manner (PubMed:14731398). Interacts with NRDE2 (PubMed:30538148). Interacts (via C-terminus) with USP36 (via C-terminus); the interaction is facilitated by the association with RNA and promotes sumoylation of EXOSC10 (PubMed:36912080).</text>
</comment>
<comment type="interaction">
    <interactant intactId="EBI-358236">
        <id>Q01780</id>
    </interactant>
    <interactant intactId="EBI-3844053">
        <id>Q13901</id>
        <label>C1D</label>
    </interactant>
    <organismsDiffer>false</organismsDiffer>
    <experiments>7</experiments>
</comment>
<comment type="interaction">
    <interactant intactId="EBI-358236">
        <id>Q01780</id>
    </interactant>
    <interactant intactId="EBI-351962">
        <id>P17844</id>
        <label>DDX5</label>
    </interactant>
    <organismsDiffer>false</organismsDiffer>
    <experiments>3</experiments>
</comment>
<comment type="interaction">
    <interactant intactId="EBI-358236">
        <id>Q01780</id>
    </interactant>
    <interactant intactId="EBI-373539">
        <id>Q9Y2L1</id>
        <label>DIS3</label>
    </interactant>
    <organismsDiffer>false</organismsDiffer>
    <experiments>4</experiments>
</comment>
<comment type="interaction">
    <interactant intactId="EBI-358236">
        <id>Q01780</id>
    </interactant>
    <interactant intactId="EBI-371823">
        <id>Q9NPD3</id>
        <label>EXOSC4</label>
    </interactant>
    <organismsDiffer>false</organismsDiffer>
    <experiments>7</experiments>
</comment>
<comment type="interaction">
    <interactant intactId="EBI-358236">
        <id>Q01780</id>
    </interactant>
    <interactant intactId="EBI-371876">
        <id>Q9NQT4</id>
        <label>EXOSC5</label>
    </interactant>
    <organismsDiffer>false</organismsDiffer>
    <experiments>7</experiments>
</comment>
<comment type="interaction">
    <interactant intactId="EBI-358236">
        <id>Q01780</id>
    </interactant>
    <interactant intactId="EBI-371841">
        <id>Q15024</id>
        <label>EXOSC7</label>
    </interactant>
    <organismsDiffer>false</organismsDiffer>
    <experiments>4</experiments>
</comment>
<comment type="interaction">
    <interactant intactId="EBI-358236">
        <id>Q01780</id>
    </interactant>
    <interactant intactId="EBI-371922">
        <id>Q96B26</id>
        <label>EXOSC8</label>
    </interactant>
    <organismsDiffer>false</organismsDiffer>
    <experiments>3</experiments>
</comment>
<comment type="interaction">
    <interactant intactId="EBI-358236">
        <id>Q01780</id>
    </interactant>
    <interactant intactId="EBI-373187">
        <id>Q99547</id>
        <label>MPHOSPH6</label>
    </interactant>
    <organismsDiffer>false</organismsDiffer>
    <experiments>7</experiments>
</comment>
<comment type="subcellular location">
    <subcellularLocation>
        <location evidence="14">Cytoplasm</location>
    </subcellularLocation>
    <subcellularLocation>
        <location evidence="27">Nucleus</location>
    </subcellularLocation>
    <subcellularLocation>
        <location evidence="14 24 25 26 27">Nucleus</location>
        <location evidence="14 24 25 26 27">Nucleolus</location>
    </subcellularLocation>
    <subcellularLocation>
        <location evidence="25 27">Nucleus</location>
        <location evidence="25 27">Nucleoplasm</location>
    </subcellularLocation>
    <text evidence="14 24 25 26">Strongly enriched in the nucleolus and a small amount has been found in cytoplasm supporting the existence of a nucleolar RNA exosome complex form (PubMed:20531386, PubMed:34516797). Arginine-rich dipeptide repeat proteins expressed from C9orf72-derived repeat RNA cause diffuse nuclear misdistribution of EXOSC10 (PubMed:32830871). Relocates to the DNA double-strand breaks in response to irradiation (PubMed:31086179).</text>
</comment>
<comment type="alternative products">
    <event type="alternative splicing"/>
    <isoform>
        <id>Q01780-1</id>
        <name>1</name>
        <sequence type="displayed"/>
    </isoform>
    <isoform>
        <id>Q01780-2</id>
        <name>2</name>
        <sequence type="described" ref="VSP_004362"/>
    </isoform>
</comment>
<comment type="induction">
    <text evidence="20">Down-regulated by mild hypothermia (at protein level).</text>
</comment>
<comment type="PTM">
    <text evidence="20 27">Sumoylated by USP36; sumoylation does not significantly affect EXOSC10 nucleolar localization and association with core exosome and USP36, but regulates the nucleolar RNA exosome activity in rRNA processing by promoting binding of EXOSC10 to pre-rRNAs (PubMed:36912080). Effects of sumoylation on EXOSC10 levels vary between different studies (PubMed:26857222, PubMed:36912080). Sumoylation of EXOSC10 is required for the modulation of EXOSC10 effects on cellular protein translation and cell proliferation (PubMed:36912080). Sumoylation is promoted by mild hypothermia (PubMed:26857222).</text>
</comment>
<comment type="similarity">
    <text evidence="30">Belongs to the exosome component 10/RRP6 family.</text>
</comment>
<protein>
    <recommendedName>
        <fullName evidence="30">Exosome complex component 10</fullName>
        <ecNumber evidence="17">3.1.13.-</ecNumber>
    </recommendedName>
    <alternativeName>
        <fullName>Autoantigen PM/Scl 2</fullName>
    </alternativeName>
    <alternativeName>
        <fullName>P100 polymyositis-scleroderma overlap syndrome-associated autoantigen</fullName>
    </alternativeName>
    <alternativeName>
        <fullName>Polymyositis/scleroderma autoantigen 100 kDa</fullName>
        <shortName>PM/Scl-100</shortName>
    </alternativeName>
    <alternativeName>
        <fullName>Polymyositis/scleroderma autoantigen 2</fullName>
    </alternativeName>
</protein>
<proteinExistence type="evidence at protein level"/>
<name>EXOSX_HUMAN</name>
<evidence type="ECO:0000250" key="1">
    <source>
        <dbReference type="UniProtKB" id="P56960"/>
    </source>
</evidence>
<evidence type="ECO:0000255" key="2"/>
<evidence type="ECO:0000255" key="3">
    <source>
        <dbReference type="PROSITE-ProRule" id="PRU00328"/>
    </source>
</evidence>
<evidence type="ECO:0000256" key="4">
    <source>
        <dbReference type="SAM" id="MobiDB-lite"/>
    </source>
</evidence>
<evidence type="ECO:0000269" key="5">
    <source>
    </source>
</evidence>
<evidence type="ECO:0000269" key="6">
    <source>
    </source>
</evidence>
<evidence type="ECO:0000269" key="7">
    <source>
    </source>
</evidence>
<evidence type="ECO:0000269" key="8">
    <source>
    </source>
</evidence>
<evidence type="ECO:0000269" key="9">
    <source>
    </source>
</evidence>
<evidence type="ECO:0000269" key="10">
    <source>
    </source>
</evidence>
<evidence type="ECO:0000269" key="11">
    <source>
    </source>
</evidence>
<evidence type="ECO:0000269" key="12">
    <source>
    </source>
</evidence>
<evidence type="ECO:0000269" key="13">
    <source>
    </source>
</evidence>
<evidence type="ECO:0000269" key="14">
    <source>
    </source>
</evidence>
<evidence type="ECO:0000269" key="15">
    <source>
    </source>
</evidence>
<evidence type="ECO:0000269" key="16">
    <source>
    </source>
</evidence>
<evidence type="ECO:0000269" key="17">
    <source>
    </source>
</evidence>
<evidence type="ECO:0000269" key="18">
    <source>
    </source>
</evidence>
<evidence type="ECO:0000269" key="19">
    <source>
    </source>
</evidence>
<evidence type="ECO:0000269" key="20">
    <source>
    </source>
</evidence>
<evidence type="ECO:0000269" key="21">
    <source>
    </source>
</evidence>
<evidence type="ECO:0000269" key="22">
    <source>
    </source>
</evidence>
<evidence type="ECO:0000269" key="23">
    <source>
    </source>
</evidence>
<evidence type="ECO:0000269" key="24">
    <source>
    </source>
</evidence>
<evidence type="ECO:0000269" key="25">
    <source>
    </source>
</evidence>
<evidence type="ECO:0000269" key="26">
    <source>
    </source>
</evidence>
<evidence type="ECO:0000269" key="27">
    <source>
    </source>
</evidence>
<evidence type="ECO:0000303" key="28">
    <source>
    </source>
</evidence>
<evidence type="ECO:0000303" key="29">
    <source>
    </source>
</evidence>
<evidence type="ECO:0000305" key="30"/>
<evidence type="ECO:0000312" key="31">
    <source>
        <dbReference type="HGNC" id="HGNC:9138"/>
    </source>
</evidence>
<evidence type="ECO:0007744" key="32">
    <source>
        <dbReference type="PDB" id="3SAF"/>
    </source>
</evidence>
<evidence type="ECO:0007744" key="33">
    <source>
        <dbReference type="PDB" id="3SAG"/>
    </source>
</evidence>
<evidence type="ECO:0007744" key="34">
    <source>
        <dbReference type="PDB" id="3SAH"/>
    </source>
</evidence>
<evidence type="ECO:0007744" key="35">
    <source>
        <dbReference type="PDB" id="6D6Q"/>
    </source>
</evidence>
<evidence type="ECO:0007744" key="36">
    <source>
        <dbReference type="PDB" id="6D6R"/>
    </source>
</evidence>
<evidence type="ECO:0007744" key="37">
    <source>
        <dbReference type="PDB" id="7MQA"/>
    </source>
</evidence>
<evidence type="ECO:0007744" key="38">
    <source>
    </source>
</evidence>
<evidence type="ECO:0007744" key="39">
    <source>
    </source>
</evidence>
<evidence type="ECO:0007744" key="40">
    <source>
    </source>
</evidence>
<evidence type="ECO:0007744" key="41">
    <source>
    </source>
</evidence>
<evidence type="ECO:0007744" key="42">
    <source>
    </source>
</evidence>
<evidence type="ECO:0007829" key="43">
    <source>
        <dbReference type="PDB" id="2CPR"/>
    </source>
</evidence>
<evidence type="ECO:0007829" key="44">
    <source>
        <dbReference type="PDB" id="3SAF"/>
    </source>
</evidence>
<evidence type="ECO:0007829" key="45">
    <source>
        <dbReference type="PDB" id="3SAH"/>
    </source>
</evidence>
<evidence type="ECO:0007829" key="46">
    <source>
        <dbReference type="PDB" id="6D6Q"/>
    </source>
</evidence>
<reference key="1">
    <citation type="journal article" date="1992" name="J. Exp. Med.">
        <title>Cloning and characterization of the cDNA coding for a polymyositis-scleroderma overlap syndrome-related nucleolar 100-kD protein.</title>
        <authorList>
            <person name="Bluethner M."/>
            <person name="Bautz F.A."/>
        </authorList>
    </citation>
    <scope>NUCLEOTIDE SEQUENCE [MRNA] (ISOFORM 1)</scope>
    <source>
        <tissue>Placenta</tissue>
    </source>
</reference>
<reference key="2">
    <citation type="journal article" date="1992" name="J. Clin. Invest.">
        <title>Cloning of a complementary DNA coding for the 100-kD antigenic protein of the PM-Scl autoantigen.</title>
        <authorList>
            <person name="Ge Q."/>
            <person name="Frank M.B."/>
            <person name="O'Brien C."/>
            <person name="Targoff I.N."/>
        </authorList>
    </citation>
    <scope>NUCLEOTIDE SEQUENCE [MRNA] (ISOFORM 2)</scope>
    <source>
        <tissue>Thymocyte</tissue>
    </source>
</reference>
<reference key="3">
    <citation type="journal article" date="2001" name="Genes Immun.">
        <title>The human gene for mannan-binding lectin-associated serine protease-2 (MASP-2), the effector component of the lectin route of complement activation, is part of a tightly linked gene cluster on chromosome 1p36.2-3.</title>
        <authorList>
            <person name="Stover C."/>
            <person name="Endo Y."/>
            <person name="Takahashi M."/>
            <person name="Lynch N."/>
            <person name="Constantinescu C."/>
            <person name="Vorup-Jensen T."/>
            <person name="Thiel S."/>
            <person name="Friedl H."/>
            <person name="Hankeln T."/>
            <person name="Hall R."/>
            <person name="Gregory S."/>
            <person name="Fujita T."/>
            <person name="Schwaeble W."/>
        </authorList>
    </citation>
    <scope>NUCLEOTIDE SEQUENCE [GENOMIC DNA] (ISOFORM 2)</scope>
</reference>
<reference key="4">
    <citation type="journal article" date="2006" name="Nature">
        <title>The DNA sequence and biological annotation of human chromosome 1.</title>
        <authorList>
            <person name="Gregory S.G."/>
            <person name="Barlow K.F."/>
            <person name="McLay K.E."/>
            <person name="Kaul R."/>
            <person name="Swarbreck D."/>
            <person name="Dunham A."/>
            <person name="Scott C.E."/>
            <person name="Howe K.L."/>
            <person name="Woodfine K."/>
            <person name="Spencer C.C.A."/>
            <person name="Jones M.C."/>
            <person name="Gillson C."/>
            <person name="Searle S."/>
            <person name="Zhou Y."/>
            <person name="Kokocinski F."/>
            <person name="McDonald L."/>
            <person name="Evans R."/>
            <person name="Phillips K."/>
            <person name="Atkinson A."/>
            <person name="Cooper R."/>
            <person name="Jones C."/>
            <person name="Hall R.E."/>
            <person name="Andrews T.D."/>
            <person name="Lloyd C."/>
            <person name="Ainscough R."/>
            <person name="Almeida J.P."/>
            <person name="Ambrose K.D."/>
            <person name="Anderson F."/>
            <person name="Andrew R.W."/>
            <person name="Ashwell R.I.S."/>
            <person name="Aubin K."/>
            <person name="Babbage A.K."/>
            <person name="Bagguley C.L."/>
            <person name="Bailey J."/>
            <person name="Beasley H."/>
            <person name="Bethel G."/>
            <person name="Bird C.P."/>
            <person name="Bray-Allen S."/>
            <person name="Brown J.Y."/>
            <person name="Brown A.J."/>
            <person name="Buckley D."/>
            <person name="Burton J."/>
            <person name="Bye J."/>
            <person name="Carder C."/>
            <person name="Chapman J.C."/>
            <person name="Clark S.Y."/>
            <person name="Clarke G."/>
            <person name="Clee C."/>
            <person name="Cobley V."/>
            <person name="Collier R.E."/>
            <person name="Corby N."/>
            <person name="Coville G.J."/>
            <person name="Davies J."/>
            <person name="Deadman R."/>
            <person name="Dunn M."/>
            <person name="Earthrowl M."/>
            <person name="Ellington A.G."/>
            <person name="Errington H."/>
            <person name="Frankish A."/>
            <person name="Frankland J."/>
            <person name="French L."/>
            <person name="Garner P."/>
            <person name="Garnett J."/>
            <person name="Gay L."/>
            <person name="Ghori M.R.J."/>
            <person name="Gibson R."/>
            <person name="Gilby L.M."/>
            <person name="Gillett W."/>
            <person name="Glithero R.J."/>
            <person name="Grafham D.V."/>
            <person name="Griffiths C."/>
            <person name="Griffiths-Jones S."/>
            <person name="Grocock R."/>
            <person name="Hammond S."/>
            <person name="Harrison E.S.I."/>
            <person name="Hart E."/>
            <person name="Haugen E."/>
            <person name="Heath P.D."/>
            <person name="Holmes S."/>
            <person name="Holt K."/>
            <person name="Howden P.J."/>
            <person name="Hunt A.R."/>
            <person name="Hunt S.E."/>
            <person name="Hunter G."/>
            <person name="Isherwood J."/>
            <person name="James R."/>
            <person name="Johnson C."/>
            <person name="Johnson D."/>
            <person name="Joy A."/>
            <person name="Kay M."/>
            <person name="Kershaw J.K."/>
            <person name="Kibukawa M."/>
            <person name="Kimberley A.M."/>
            <person name="King A."/>
            <person name="Knights A.J."/>
            <person name="Lad H."/>
            <person name="Laird G."/>
            <person name="Lawlor S."/>
            <person name="Leongamornlert D.A."/>
            <person name="Lloyd D.M."/>
            <person name="Loveland J."/>
            <person name="Lovell J."/>
            <person name="Lush M.J."/>
            <person name="Lyne R."/>
            <person name="Martin S."/>
            <person name="Mashreghi-Mohammadi M."/>
            <person name="Matthews L."/>
            <person name="Matthews N.S.W."/>
            <person name="McLaren S."/>
            <person name="Milne S."/>
            <person name="Mistry S."/>
            <person name="Moore M.J.F."/>
            <person name="Nickerson T."/>
            <person name="O'Dell C.N."/>
            <person name="Oliver K."/>
            <person name="Palmeiri A."/>
            <person name="Palmer S.A."/>
            <person name="Parker A."/>
            <person name="Patel D."/>
            <person name="Pearce A.V."/>
            <person name="Peck A.I."/>
            <person name="Pelan S."/>
            <person name="Phelps K."/>
            <person name="Phillimore B.J."/>
            <person name="Plumb R."/>
            <person name="Rajan J."/>
            <person name="Raymond C."/>
            <person name="Rouse G."/>
            <person name="Saenphimmachak C."/>
            <person name="Sehra H.K."/>
            <person name="Sheridan E."/>
            <person name="Shownkeen R."/>
            <person name="Sims S."/>
            <person name="Skuce C.D."/>
            <person name="Smith M."/>
            <person name="Steward C."/>
            <person name="Subramanian S."/>
            <person name="Sycamore N."/>
            <person name="Tracey A."/>
            <person name="Tromans A."/>
            <person name="Van Helmond Z."/>
            <person name="Wall M."/>
            <person name="Wallis J.M."/>
            <person name="White S."/>
            <person name="Whitehead S.L."/>
            <person name="Wilkinson J.E."/>
            <person name="Willey D.L."/>
            <person name="Williams H."/>
            <person name="Wilming L."/>
            <person name="Wray P.W."/>
            <person name="Wu Z."/>
            <person name="Coulson A."/>
            <person name="Vaudin M."/>
            <person name="Sulston J.E."/>
            <person name="Durbin R.M."/>
            <person name="Hubbard T."/>
            <person name="Wooster R."/>
            <person name="Dunham I."/>
            <person name="Carter N.P."/>
            <person name="McVean G."/>
            <person name="Ross M.T."/>
            <person name="Harrow J."/>
            <person name="Olson M.V."/>
            <person name="Beck S."/>
            <person name="Rogers J."/>
            <person name="Bentley D.R."/>
        </authorList>
    </citation>
    <scope>NUCLEOTIDE SEQUENCE [LARGE SCALE GENOMIC DNA]</scope>
</reference>
<reference key="5">
    <citation type="submission" date="2005-07" db="EMBL/GenBank/DDBJ databases">
        <authorList>
            <person name="Mural R.J."/>
            <person name="Istrail S."/>
            <person name="Sutton G.G."/>
            <person name="Florea L."/>
            <person name="Halpern A.L."/>
            <person name="Mobarry C.M."/>
            <person name="Lippert R."/>
            <person name="Walenz B."/>
            <person name="Shatkay H."/>
            <person name="Dew I."/>
            <person name="Miller J.R."/>
            <person name="Flanigan M.J."/>
            <person name="Edwards N.J."/>
            <person name="Bolanos R."/>
            <person name="Fasulo D."/>
            <person name="Halldorsson B.V."/>
            <person name="Hannenhalli S."/>
            <person name="Turner R."/>
            <person name="Yooseph S."/>
            <person name="Lu F."/>
            <person name="Nusskern D.R."/>
            <person name="Shue B.C."/>
            <person name="Zheng X.H."/>
            <person name="Zhong F."/>
            <person name="Delcher A.L."/>
            <person name="Huson D.H."/>
            <person name="Kravitz S.A."/>
            <person name="Mouchard L."/>
            <person name="Reinert K."/>
            <person name="Remington K.A."/>
            <person name="Clark A.G."/>
            <person name="Waterman M.S."/>
            <person name="Eichler E.E."/>
            <person name="Adams M.D."/>
            <person name="Hunkapiller M.W."/>
            <person name="Myers E.W."/>
            <person name="Venter J.C."/>
        </authorList>
    </citation>
    <scope>NUCLEOTIDE SEQUENCE [LARGE SCALE GENOMIC DNA]</scope>
</reference>
<reference key="6">
    <citation type="journal article" date="2004" name="Genome Res.">
        <title>The status, quality, and expansion of the NIH full-length cDNA project: the Mammalian Gene Collection (MGC).</title>
        <authorList>
            <consortium name="The MGC Project Team"/>
        </authorList>
    </citation>
    <scope>NUCLEOTIDE SEQUENCE [LARGE SCALE MRNA] (ISOFORM 1)</scope>
    <source>
        <tissue>Lymph</tissue>
        <tissue>Skin</tissue>
    </source>
</reference>
<reference key="7">
    <citation type="journal article" date="1999" name="Genes Dev.">
        <title>The yeast exosome and human PM-Scl are related complexes of 3'--&gt;5' exonucleases.</title>
        <authorList>
            <person name="Allmang C."/>
            <person name="Petfalski E."/>
            <person name="Podtelejnikov A."/>
            <person name="Mann M."/>
            <person name="Tollervey D."/>
            <person name="Mitchell P."/>
        </authorList>
    </citation>
    <scope>CHARACTERIZATION</scope>
</reference>
<reference key="8">
    <citation type="journal article" date="2002" name="Mol. Biol. Cell">
        <title>Functional proteomic analysis of human nucleolus.</title>
        <authorList>
            <person name="Scherl A."/>
            <person name="Coute Y."/>
            <person name="Deon C."/>
            <person name="Calle A."/>
            <person name="Kindbeiter K."/>
            <person name="Sanchez J.-C."/>
            <person name="Greco A."/>
            <person name="Hochstrasser D.F."/>
            <person name="Diaz J.-J."/>
        </authorList>
    </citation>
    <scope>SUBCELLULAR LOCATION [LARGE SCALE ANALYSIS]</scope>
    <source>
        <tissue>Cervix carcinoma</tissue>
    </source>
</reference>
<reference key="9">
    <citation type="journal article" date="2003" name="Mol. Cell">
        <title>Nonsense-mediated mRNA decay in mammalian cells involves decapping, deadenylating, and exonucleolytic activities.</title>
        <authorList>
            <person name="Lejeune F."/>
            <person name="Li X."/>
            <person name="Maquat L.E."/>
        </authorList>
    </citation>
    <scope>FUNCTION IN NONSENSE-MEDIATED MRNA DECAY</scope>
    <scope>SUBCELLULAR LOCATION</scope>
</reference>
<reference key="10">
    <citation type="journal article" date="2004" name="Genome Res.">
        <title>A protein interaction framework for human mRNA degradation.</title>
        <authorList>
            <person name="Lehner B."/>
            <person name="Sanderson C.M."/>
        </authorList>
    </citation>
    <scope>PROTEIN INTERACTION</scope>
</reference>
<reference key="11">
    <citation type="journal article" date="2004" name="Mol. Cell">
        <title>Facilitation of mRNA deadenylation and decay by the exosome-bound, DExH protein RHAU.</title>
        <authorList>
            <person name="Tran H."/>
            <person name="Schilling M."/>
            <person name="Wirbelauer C."/>
            <person name="Hess D."/>
            <person name="Nagamine Y."/>
        </authorList>
    </citation>
    <scope>INTERACTION WITH DHX36</scope>
</reference>
<reference key="12">
    <citation type="journal article" date="2006" name="Mol. Cell">
        <title>Adenylation and exosome-mediated degradation of cotranscriptionally cleaved pre-messenger RNA in human cells.</title>
        <authorList>
            <person name="West S."/>
            <person name="Gromak N."/>
            <person name="Norbury C.J."/>
            <person name="Proudfoot N.J."/>
        </authorList>
    </citation>
    <scope>FUNCTION IN NUCLEAR PRE-MRNA DEGRADATION</scope>
</reference>
<reference key="13">
    <citation type="journal article" date="2007" name="Genes Dev.">
        <title>The Spt6 SH2 domain binds Ser2-P RNAPII to direct Iws1-dependent mRNA splicing and export.</title>
        <authorList>
            <person name="Yoh S.M."/>
            <person name="Cho H."/>
            <person name="Pickle L."/>
            <person name="Evans R.M."/>
            <person name="Jones K.A."/>
        </authorList>
    </citation>
    <scope>INTERACTION WITH ALYREF</scope>
</reference>
<reference key="14">
    <citation type="journal article" date="2007" name="Nucleic Acids Res.">
        <title>C1D and hMtr4p associate with the human exosome subunit PM/Scl-100 and are involved in pre-rRNA processing.</title>
        <authorList>
            <person name="Schilders G."/>
            <person name="van Dijk E."/>
            <person name="Pruijn G.J.M."/>
        </authorList>
    </citation>
    <scope>FUNCTION</scope>
    <scope>SUBCELLULAR LOCATION</scope>
    <scope>INTERACTION WITH C1D AND MPHOSPH6</scope>
</reference>
<reference key="15">
    <citation type="journal article" date="2007" name="RNA">
        <title>Human cell growth requires a functional cytoplasmic exosome, which is involved in various mRNA decay pathways.</title>
        <authorList>
            <person name="van Dijk E.L."/>
            <person name="Schilders G."/>
            <person name="Pruijn G.J."/>
        </authorList>
    </citation>
    <scope>FUNCTION IN MRNA DEGRADATION</scope>
    <scope>SUBCELLULAR LOCATION</scope>
</reference>
<reference key="16">
    <citation type="journal article" date="2008" name="Genes Dev.">
        <title>Degradation of histone mRNA requires oligouridylation followed by decapping and simultaneous degradation of the mRNA both 5' to 3' and 3' to 5'.</title>
        <authorList>
            <person name="Mullen T.E."/>
            <person name="Marzluff W.F."/>
        </authorList>
    </citation>
    <scope>FUNCTION IN HISTONE MRNA DEGRADATION ACTIVITY</scope>
</reference>
<reference key="17">
    <citation type="journal article" date="2008" name="Science">
        <title>RNA exosome depletion reveals transcription upstream of active human promoters.</title>
        <authorList>
            <person name="Preker P."/>
            <person name="Nielsen J."/>
            <person name="Kammler S."/>
            <person name="Lykke-Andersen S."/>
            <person name="Christensen M.S."/>
            <person name="Mapendano C.K."/>
            <person name="Schierup M.H."/>
            <person name="Jensen T.H."/>
        </authorList>
    </citation>
    <scope>FUNCTION IN PROMPT DEGRADATION</scope>
</reference>
<reference key="18">
    <citation type="journal article" date="2010" name="EMBO J.">
        <title>The human core exosome interacts with differentially localized processive RNases: hDIS3 and hDIS3L.</title>
        <authorList>
            <person name="Tomecki R."/>
            <person name="Kristiansen M.S."/>
            <person name="Lykke-Andersen S."/>
            <person name="Chlebowski A."/>
            <person name="Larsen K.M."/>
            <person name="Szczesny R.J."/>
            <person name="Drazkowska K."/>
            <person name="Pastula A."/>
            <person name="Andersen J.S."/>
            <person name="Stepien P.P."/>
            <person name="Dziembowski A."/>
            <person name="Jensen T.H."/>
        </authorList>
    </citation>
    <scope>ASSOCIATION WITH THE RNA EXOSOME COMPLEX</scope>
    <scope>SUBCELLULAR LOCATION</scope>
</reference>
<reference key="19">
    <citation type="journal article" date="2010" name="EMBO J.">
        <title>Dis3-like 1: a novel exoribonuclease associated with the human exosome.</title>
        <authorList>
            <person name="Staals R.H."/>
            <person name="Bronkhorst A.W."/>
            <person name="Schilders G."/>
            <person name="Slomovic S."/>
            <person name="Schuster G."/>
            <person name="Heck A.J."/>
            <person name="Raijmakers R."/>
            <person name="Pruijn G.J."/>
        </authorList>
    </citation>
    <scope>IDENTIFICATION IN THE RNA EXOSOME COMPLEX</scope>
    <scope>IDENTIFICATION BY MASS SPECTROMETRY</scope>
</reference>
<reference key="20">
    <citation type="journal article" date="2010" name="Nucleic Acids Res.">
        <title>A link between nuclear RNA surveillance, the human exosome and RNA polymerase II transcriptional termination.</title>
        <authorList>
            <person name="de Almeida S.F."/>
            <person name="Garcia-Sacristan A."/>
            <person name="Custodio N."/>
            <person name="Carmo-Fonseca M."/>
        </authorList>
    </citation>
    <scope>FUNCTION IN NUCLEAR MRNA SURVEILLANCE</scope>
</reference>
<reference key="21">
    <citation type="journal article" date="2010" name="Proc. Natl. Acad. Sci. U.S.A.">
        <title>Addition of poly(A) and poly(A)-rich tails during RNA degradation in the cytoplasm of human cells.</title>
        <authorList>
            <person name="Slomovic S."/>
            <person name="Fremder E."/>
            <person name="Staals R.H."/>
            <person name="Pruijn G.J."/>
            <person name="Schuster G."/>
        </authorList>
    </citation>
    <scope>FUNCTION IN RRNA MATURATION</scope>
</reference>
<reference key="22">
    <citation type="journal article" date="2011" name="BMC Syst. Biol.">
        <title>Initial characterization of the human central proteome.</title>
        <authorList>
            <person name="Burkard T.R."/>
            <person name="Planyavsky M."/>
            <person name="Kaupe I."/>
            <person name="Breitwieser F.P."/>
            <person name="Buerckstuemmer T."/>
            <person name="Bennett K.L."/>
            <person name="Superti-Furga G."/>
            <person name="Colinge J."/>
        </authorList>
    </citation>
    <scope>IDENTIFICATION BY MASS SPECTROMETRY [LARGE SCALE ANALYSIS]</scope>
</reference>
<reference key="23">
    <citation type="journal article" date="2013" name="J. Proteome Res.">
        <title>Toward a comprehensive characterization of a human cancer cell phosphoproteome.</title>
        <authorList>
            <person name="Zhou H."/>
            <person name="Di Palma S."/>
            <person name="Preisinger C."/>
            <person name="Peng M."/>
            <person name="Polat A.N."/>
            <person name="Heck A.J."/>
            <person name="Mohammed S."/>
        </authorList>
    </citation>
    <scope>PHOSPHORYLATION [LARGE SCALE ANALYSIS] AT SER-821</scope>
    <scope>IDENTIFICATION BY MASS SPECTROMETRY [LARGE SCALE ANALYSIS]</scope>
    <source>
        <tissue>Erythroleukemia</tissue>
    </source>
</reference>
<reference key="24">
    <citation type="journal article" date="2014" name="Nat. Struct. Mol. Biol.">
        <title>Uncovering global SUMOylation signaling networks in a site-specific manner.</title>
        <authorList>
            <person name="Hendriks I.A."/>
            <person name="D'Souza R.C."/>
            <person name="Yang B."/>
            <person name="Verlaan-de Vries M."/>
            <person name="Mann M."/>
            <person name="Vertegaal A.C."/>
        </authorList>
    </citation>
    <scope>SUMOYLATION [LARGE SCALE ANALYSIS] AT LYS-583</scope>
    <scope>IDENTIFICATION BY MASS SPECTROMETRY [LARGE SCALE ANALYSIS]</scope>
</reference>
<reference key="25">
    <citation type="journal article" date="2014" name="Proc. Natl. Acad. Sci. U.S.A.">
        <title>Mapping of SUMO sites and analysis of SUMOylation changes induced by external stimuli.</title>
        <authorList>
            <person name="Impens F."/>
            <person name="Radoshevich L."/>
            <person name="Cossart P."/>
            <person name="Ribet D."/>
        </authorList>
    </citation>
    <scope>SUMOYLATION [LARGE SCALE ANALYSIS] AT LYS-583</scope>
    <scope>IDENTIFICATION BY MASS SPECTROMETRY [LARGE SCALE ANALYSIS]</scope>
</reference>
<reference key="26">
    <citation type="journal article" date="2015" name="Biochem. Biophys. Res. Commun.">
        <title>NVL2, a nucleolar AAA-ATPase, is associated with the nuclear exosome and is involved in pre-rRNA processing.</title>
        <authorList>
            <person name="Yoshikatsu Y."/>
            <person name="Ishida Y."/>
            <person name="Sudo H."/>
            <person name="Yuasa K."/>
            <person name="Tsuji A."/>
            <person name="Nagahama M."/>
        </authorList>
    </citation>
    <scope>IDENTIFICATION IN THE RNA EXOSOME COMPLEX</scope>
</reference>
<reference key="27">
    <citation type="journal article" date="2015" name="Cell Rep.">
        <title>SUMO-2 orchestrates chromatin modifiers in response to DNA damage.</title>
        <authorList>
            <person name="Hendriks I.A."/>
            <person name="Treffers L.W."/>
            <person name="Verlaan-de Vries M."/>
            <person name="Olsen J.V."/>
            <person name="Vertegaal A.C."/>
        </authorList>
    </citation>
    <scope>SUMOYLATION [LARGE SCALE ANALYSIS] AT LYS-826</scope>
    <scope>IDENTIFICATION BY MASS SPECTROMETRY [LARGE SCALE ANALYSIS]</scope>
</reference>
<reference evidence="30" key="28">
    <citation type="journal article" date="2015" name="J. Cell Sci.">
        <title>RRP6/EXOSC10 is required for the repair of DNA double-strand breaks by homologous recombination.</title>
        <authorList>
            <person name="Marin-Vicente C."/>
            <person name="Domingo-Prim J."/>
            <person name="Eberle A.B."/>
            <person name="Visa N."/>
        </authorList>
    </citation>
    <scope>FUNCTION</scope>
</reference>
<reference evidence="30" key="29">
    <citation type="journal article" date="2016" name="RNA">
        <title>Cooling-induced SUMOylation of EXOSC10 down-regulates ribosome biogenesis.</title>
        <authorList>
            <person name="Knight J.R."/>
            <person name="Bastide A."/>
            <person name="Peretti D."/>
            <person name="Roobol A."/>
            <person name="Roobol J."/>
            <person name="Mallucci G.R."/>
            <person name="Smales C.M."/>
            <person name="Willis A.E."/>
        </authorList>
    </citation>
    <scope>FUNCTION</scope>
    <scope>INDUCTION</scope>
    <scope>SUMOYLATION</scope>
    <scope>MUTAGENESIS OF LYS-168; LYS-201 AND LYS-583</scope>
</reference>
<reference key="30">
    <citation type="journal article" date="2017" name="Nat. Struct. Mol. Biol.">
        <title>Site-specific mapping of the human SUMO proteome reveals co-modification with phosphorylation.</title>
        <authorList>
            <person name="Hendriks I.A."/>
            <person name="Lyon D."/>
            <person name="Young C."/>
            <person name="Jensen L.J."/>
            <person name="Vertegaal A.C."/>
            <person name="Nielsen M.L."/>
        </authorList>
    </citation>
    <scope>SUMOYLATION [LARGE SCALE ANALYSIS] AT LYS-19; LYS-583; LYS-710; LYS-826; LYS-833; LYS-859 AND LYS-873</scope>
    <scope>IDENTIFICATION BY MASS SPECTROMETRY [LARGE SCALE ANALYSIS]</scope>
</reference>
<reference key="31">
    <citation type="journal article" date="2018" name="Elife">
        <title>Distinct and evolutionary conserved structural features of the human nuclear exosome complex.</title>
        <authorList>
            <person name="Gerlach P."/>
            <person name="Schuller J.M."/>
            <person name="Bonneau F."/>
            <person name="Basquin J."/>
            <person name="Reichelt P."/>
            <person name="Falk S."/>
            <person name="Conti E."/>
        </authorList>
    </citation>
    <scope>INTERACTION WITH THE RNA EXOSOME COMPLEX</scope>
</reference>
<reference evidence="30" key="32">
    <citation type="journal article" date="2019" name="Nat. Commun.">
        <title>EXOSC10 is required for RPA assembly and controlled DNA end resection at DNA double-strand breaks.</title>
        <authorList>
            <person name="Domingo-Prim J."/>
            <person name="Endara-Coll M."/>
            <person name="Bonath F."/>
            <person name="Jimeno S."/>
            <person name="Prados-Carvajal R."/>
            <person name="Friedlaender M.R."/>
            <person name="Huertas P."/>
            <person name="Visa N."/>
        </authorList>
    </citation>
    <scope>FUNCTION</scope>
    <scope>SUBCELLULAR LOCATION</scope>
</reference>
<reference key="33">
    <citation type="journal article" date="2019" name="RNA">
        <title>Human nuclear RNAi-defective 2 (NRDE2) is an essential RNA splicing factor.</title>
        <authorList>
            <person name="Jiao A.L."/>
            <person name="Perales R."/>
            <person name="Umbreit N.T."/>
            <person name="Haswell J.R."/>
            <person name="Piper M.E."/>
            <person name="Adams B.D."/>
            <person name="Pellman D."/>
            <person name="Kennedy S."/>
            <person name="Slack F.J."/>
        </authorList>
    </citation>
    <scope>INTERACTION WITH NRDE2</scope>
</reference>
<reference evidence="30" key="34">
    <citation type="journal article" date="2020" name="EMBO J.">
        <title>The RNA exosome complex degrades expanded hexanucleotide repeat RNA in C9orf72 FTLD/ALS.</title>
        <authorList>
            <person name="Kawabe Y."/>
            <person name="Mori K."/>
            <person name="Yamashita T."/>
            <person name="Gotoh S."/>
            <person name="Ikeda M."/>
        </authorList>
    </citation>
    <scope>FUNCTION</scope>
    <scope>ACTIVITY REGULATION</scope>
    <scope>SUBCELLULAR LOCATION</scope>
</reference>
<reference evidence="30" key="35">
    <citation type="journal article" date="2023" name="Nucleic Acids Res.">
        <title>The ubiquitin-specific protease USP36 SUMOylates EXOSC10 and promotes the nucleolar RNA exosome function in rRNA processing.</title>
        <authorList>
            <person name="Chen Y."/>
            <person name="Li Y."/>
            <person name="Dai R.S."/>
            <person name="Savage J.C."/>
            <person name="Shinde U."/>
            <person name="Klimek J."/>
            <person name="David L.L."/>
            <person name="Young E.A."/>
            <person name="Hafner M."/>
            <person name="Sears R.C."/>
            <person name="Sun X.X."/>
            <person name="Dai M.S."/>
        </authorList>
    </citation>
    <scope>FUNCTION</scope>
    <scope>INTERACTION WITH USP36</scope>
    <scope>SUBCELLULAR LOCATION</scope>
    <scope>SUMOYLATION</scope>
    <scope>MUTAGENESIS OF LYS-19; LYS-168; LYS-583; LYS-710; LYS-826; LYS-833; LYS-859 AND LYS-873</scope>
</reference>
<reference key="36">
    <citation type="submission" date="2005-11" db="PDB data bank">
        <title>Solution structure of the HRDC domain of human exosome component 10.</title>
        <authorList>
            <consortium name="RIKEN structural genomics initiative (RSGI)"/>
        </authorList>
    </citation>
    <scope>STRUCTURE BY NMR OF 483-593</scope>
</reference>
<reference evidence="32 33 34" key="37">
    <citation type="journal article" date="2011" name="RNA">
        <title>Activities of human RRP6 and structure of the human RRP6 catalytic domain.</title>
        <authorList>
            <person name="Januszyk K."/>
            <person name="Liu Q."/>
            <person name="Lima C.D."/>
        </authorList>
    </citation>
    <scope>X-RAY CRYSTALLOGRAPHY (2.5 ANGSTROMS) OF 180-606 OF MUTANTS ASN-313 AND ALA-436 IN COMPLEX WITH MAGNESIUM</scope>
    <scope>CATALYTIC ACTIVITY</scope>
    <scope>COFACTOR</scope>
    <scope>MUTAGENESIS OF ASP-313; GLU-315; HIS-316; ASP-371; ASP-404 AND TYR-436</scope>
</reference>
<reference evidence="35 36" key="38">
    <citation type="journal article" date="2018" name="Cell">
        <title>Helicase-Dependent RNA Decay Illuminated by a Cryo-EM Structure of a Human Nuclear RNA Exosome-MTR4 Complex.</title>
        <authorList>
            <person name="Weick E.M."/>
            <person name="Puno M.R."/>
            <person name="Januszyk K."/>
            <person name="Zinder J.C."/>
            <person name="DiMattia M.A."/>
            <person name="Lima C.D."/>
        </authorList>
    </citation>
    <scope>STRUCTURE BY ELECTRON MICROSCOPY (3.45 ANGSTROMS)</scope>
    <scope>SUBUNIT</scope>
</reference>
<reference evidence="37" key="39">
    <citation type="journal article" date="2021" name="Science">
        <title>Nucleolar maturation of the human small subunit processome.</title>
        <authorList>
            <person name="Singh S."/>
            <person name="Vanden Broeck A."/>
            <person name="Miller L."/>
            <person name="Chaker-Margot M."/>
            <person name="Klinge S."/>
        </authorList>
    </citation>
    <scope>STRUCTURE BY ELECTRON MICROSCOPY (2.70 ANGSTROMS)</scope>
    <scope>FUNCTION</scope>
    <scope>SUBCELLULAR LOCATION</scope>
    <scope>SUBUNIT</scope>
</reference>
<organism>
    <name type="scientific">Homo sapiens</name>
    <name type="common">Human</name>
    <dbReference type="NCBI Taxonomy" id="9606"/>
    <lineage>
        <taxon>Eukaryota</taxon>
        <taxon>Metazoa</taxon>
        <taxon>Chordata</taxon>
        <taxon>Craniata</taxon>
        <taxon>Vertebrata</taxon>
        <taxon>Euteleostomi</taxon>
        <taxon>Mammalia</taxon>
        <taxon>Eutheria</taxon>
        <taxon>Euarchontoglires</taxon>
        <taxon>Primates</taxon>
        <taxon>Haplorrhini</taxon>
        <taxon>Catarrhini</taxon>
        <taxon>Hominidae</taxon>
        <taxon>Homo</taxon>
    </lineage>
</organism>
<keyword id="KW-0002">3D-structure</keyword>
<keyword id="KW-0025">Alternative splicing</keyword>
<keyword id="KW-0963">Cytoplasm</keyword>
<keyword id="KW-0227">DNA damage</keyword>
<keyword id="KW-0234">DNA repair</keyword>
<keyword id="KW-0269">Exonuclease</keyword>
<keyword id="KW-0271">Exosome</keyword>
<keyword id="KW-0378">Hydrolase</keyword>
<keyword id="KW-1017">Isopeptide bond</keyword>
<keyword id="KW-0460">Magnesium</keyword>
<keyword id="KW-0479">Metal-binding</keyword>
<keyword id="KW-0866">Nonsense-mediated mRNA decay</keyword>
<keyword id="KW-0540">Nuclease</keyword>
<keyword id="KW-0539">Nucleus</keyword>
<keyword id="KW-0597">Phosphoprotein</keyword>
<keyword id="KW-1267">Proteomics identification</keyword>
<keyword id="KW-1185">Reference proteome</keyword>
<keyword id="KW-0694">RNA-binding</keyword>
<keyword id="KW-0698">rRNA processing</keyword>
<keyword id="KW-0832">Ubl conjugation</keyword>